<proteinExistence type="inferred from homology"/>
<evidence type="ECO:0000255" key="1">
    <source>
        <dbReference type="HAMAP-Rule" id="MF_00214"/>
    </source>
</evidence>
<dbReference type="EC" id="4.2.1.10" evidence="1"/>
<dbReference type="EMBL" id="AE014075">
    <property type="protein sequence ID" value="AAN80548.1"/>
    <property type="molecule type" value="Genomic_DNA"/>
</dbReference>
<dbReference type="RefSeq" id="WP_000860194.1">
    <property type="nucleotide sequence ID" value="NZ_CP051263.1"/>
</dbReference>
<dbReference type="SMR" id="Q8FH42"/>
<dbReference type="STRING" id="199310.c2088"/>
<dbReference type="KEGG" id="ecc:c2088"/>
<dbReference type="eggNOG" id="COG0710">
    <property type="taxonomic scope" value="Bacteria"/>
</dbReference>
<dbReference type="HOGENOM" id="CLU_064444_0_0_6"/>
<dbReference type="BioCyc" id="ECOL199310:C2088-MONOMER"/>
<dbReference type="UniPathway" id="UPA00053">
    <property type="reaction ID" value="UER00086"/>
</dbReference>
<dbReference type="Proteomes" id="UP000001410">
    <property type="component" value="Chromosome"/>
</dbReference>
<dbReference type="GO" id="GO:0003855">
    <property type="term" value="F:3-dehydroquinate dehydratase activity"/>
    <property type="evidence" value="ECO:0007669"/>
    <property type="project" value="UniProtKB-UniRule"/>
</dbReference>
<dbReference type="GO" id="GO:0046279">
    <property type="term" value="P:3,4-dihydroxybenzoate biosynthetic process"/>
    <property type="evidence" value="ECO:0007669"/>
    <property type="project" value="TreeGrafter"/>
</dbReference>
<dbReference type="GO" id="GO:0008652">
    <property type="term" value="P:amino acid biosynthetic process"/>
    <property type="evidence" value="ECO:0007669"/>
    <property type="project" value="UniProtKB-KW"/>
</dbReference>
<dbReference type="GO" id="GO:0009073">
    <property type="term" value="P:aromatic amino acid family biosynthetic process"/>
    <property type="evidence" value="ECO:0007669"/>
    <property type="project" value="UniProtKB-KW"/>
</dbReference>
<dbReference type="GO" id="GO:0009423">
    <property type="term" value="P:chorismate biosynthetic process"/>
    <property type="evidence" value="ECO:0007669"/>
    <property type="project" value="UniProtKB-UniRule"/>
</dbReference>
<dbReference type="CDD" id="cd00502">
    <property type="entry name" value="DHQase_I"/>
    <property type="match status" value="1"/>
</dbReference>
<dbReference type="FunFam" id="3.20.20.70:FF:000047">
    <property type="entry name" value="3-dehydroquinate dehydratase"/>
    <property type="match status" value="1"/>
</dbReference>
<dbReference type="Gene3D" id="3.20.20.70">
    <property type="entry name" value="Aldolase class I"/>
    <property type="match status" value="1"/>
</dbReference>
<dbReference type="HAMAP" id="MF_00214">
    <property type="entry name" value="AroD"/>
    <property type="match status" value="1"/>
</dbReference>
<dbReference type="InterPro" id="IPR018508">
    <property type="entry name" value="3-dehydroquinate_DH_AS"/>
</dbReference>
<dbReference type="InterPro" id="IPR013785">
    <property type="entry name" value="Aldolase_TIM"/>
</dbReference>
<dbReference type="InterPro" id="IPR001381">
    <property type="entry name" value="DHquinase_I"/>
</dbReference>
<dbReference type="InterPro" id="IPR050146">
    <property type="entry name" value="Type-I_3-dehydroquinase"/>
</dbReference>
<dbReference type="NCBIfam" id="TIGR01093">
    <property type="entry name" value="aroD"/>
    <property type="match status" value="1"/>
</dbReference>
<dbReference type="PANTHER" id="PTHR43699">
    <property type="entry name" value="3-DEHYDROQUINATE DEHYDRATASE"/>
    <property type="match status" value="1"/>
</dbReference>
<dbReference type="PANTHER" id="PTHR43699:SF1">
    <property type="entry name" value="3-DEHYDROQUINATE DEHYDRATASE"/>
    <property type="match status" value="1"/>
</dbReference>
<dbReference type="Pfam" id="PF01487">
    <property type="entry name" value="DHquinase_I"/>
    <property type="match status" value="1"/>
</dbReference>
<dbReference type="SUPFAM" id="SSF51569">
    <property type="entry name" value="Aldolase"/>
    <property type="match status" value="1"/>
</dbReference>
<dbReference type="PROSITE" id="PS01028">
    <property type="entry name" value="DEHYDROQUINASE_I"/>
    <property type="match status" value="1"/>
</dbReference>
<reference key="1">
    <citation type="journal article" date="2002" name="Proc. Natl. Acad. Sci. U.S.A.">
        <title>Extensive mosaic structure revealed by the complete genome sequence of uropathogenic Escherichia coli.</title>
        <authorList>
            <person name="Welch R.A."/>
            <person name="Burland V."/>
            <person name="Plunkett G. III"/>
            <person name="Redford P."/>
            <person name="Roesch P."/>
            <person name="Rasko D."/>
            <person name="Buckles E.L."/>
            <person name="Liou S.-R."/>
            <person name="Boutin A."/>
            <person name="Hackett J."/>
            <person name="Stroud D."/>
            <person name="Mayhew G.F."/>
            <person name="Rose D.J."/>
            <person name="Zhou S."/>
            <person name="Schwartz D.C."/>
            <person name="Perna N.T."/>
            <person name="Mobley H.L.T."/>
            <person name="Donnenberg M.S."/>
            <person name="Blattner F.R."/>
        </authorList>
    </citation>
    <scope>NUCLEOTIDE SEQUENCE [LARGE SCALE GENOMIC DNA]</scope>
    <source>
        <strain>CFT073 / ATCC 700928 / UPEC</strain>
    </source>
</reference>
<accession>Q8FH42</accession>
<comment type="function">
    <text evidence="1">Involved in the third step of the chorismate pathway, which leads to the biosynthesis of aromatic amino acids. Catalyzes the cis-dehydration of 3-dehydroquinate (DHQ) and introduces the first double bond of the aromatic ring to yield 3-dehydroshikimate.</text>
</comment>
<comment type="catalytic activity">
    <reaction evidence="1">
        <text>3-dehydroquinate = 3-dehydroshikimate + H2O</text>
        <dbReference type="Rhea" id="RHEA:21096"/>
        <dbReference type="ChEBI" id="CHEBI:15377"/>
        <dbReference type="ChEBI" id="CHEBI:16630"/>
        <dbReference type="ChEBI" id="CHEBI:32364"/>
        <dbReference type="EC" id="4.2.1.10"/>
    </reaction>
</comment>
<comment type="pathway">
    <text evidence="1">Metabolic intermediate biosynthesis; chorismate biosynthesis; chorismate from D-erythrose 4-phosphate and phosphoenolpyruvate: step 3/7.</text>
</comment>
<comment type="subunit">
    <text evidence="1">Homodimer.</text>
</comment>
<comment type="similarity">
    <text evidence="1">Belongs to the type-I 3-dehydroquinase family.</text>
</comment>
<keyword id="KW-0028">Amino-acid biosynthesis</keyword>
<keyword id="KW-0057">Aromatic amino acid biosynthesis</keyword>
<keyword id="KW-0456">Lyase</keyword>
<keyword id="KW-1185">Reference proteome</keyword>
<keyword id="KW-0704">Schiff base</keyword>
<protein>
    <recommendedName>
        <fullName evidence="1">3-dehydroquinate dehydratase</fullName>
        <shortName evidence="1">3-dehydroquinase</shortName>
        <ecNumber evidence="1">4.2.1.10</ecNumber>
    </recommendedName>
    <alternativeName>
        <fullName evidence="1">Type I DHQase</fullName>
    </alternativeName>
    <alternativeName>
        <fullName evidence="1">Type I dehydroquinase</fullName>
        <shortName evidence="1">DHQ1</shortName>
    </alternativeName>
</protein>
<name>AROD_ECOL6</name>
<gene>
    <name evidence="1" type="primary">aroD</name>
    <name type="ordered locus">c2088</name>
</gene>
<sequence>MKTVTVKDLVIGTGAPKIIVSLMAKDIASVKSEALAYREADFDILEWRVDHYADLSNVESVIAAAKILRETMPEKPLLFTFRSAKEGGEQAISTEAYIALNRAAIDSGLVDMIDLELFTGDDQVKETVAYAHAHDVKVVMSNHDFHKTPEAEEIIARLRKMQSFDADIPKIALMPQSTSDVLTLLAATLEMQEQYADRPIITMSMAKTGVISRLAGEVFGSAATFGAVKKASAPGQISVNDLRTVLTILHQA</sequence>
<feature type="chain" id="PRO_0000138795" description="3-dehydroquinate dehydratase">
    <location>
        <begin position="1"/>
        <end position="252"/>
    </location>
</feature>
<feature type="active site" description="Proton donor/acceptor" evidence="1">
    <location>
        <position position="143"/>
    </location>
</feature>
<feature type="active site" description="Schiff-base intermediate with substrate" evidence="1">
    <location>
        <position position="170"/>
    </location>
</feature>
<feature type="binding site" evidence="1">
    <location>
        <position position="21"/>
    </location>
    <ligand>
        <name>3-dehydroquinate</name>
        <dbReference type="ChEBI" id="CHEBI:32364"/>
    </ligand>
</feature>
<feature type="binding site" evidence="1">
    <location>
        <begin position="46"/>
        <end position="48"/>
    </location>
    <ligand>
        <name>3-dehydroquinate</name>
        <dbReference type="ChEBI" id="CHEBI:32364"/>
    </ligand>
</feature>
<feature type="binding site" evidence="1">
    <location>
        <position position="82"/>
    </location>
    <ligand>
        <name>3-dehydroquinate</name>
        <dbReference type="ChEBI" id="CHEBI:32364"/>
    </ligand>
</feature>
<feature type="binding site" evidence="1">
    <location>
        <position position="213"/>
    </location>
    <ligand>
        <name>3-dehydroquinate</name>
        <dbReference type="ChEBI" id="CHEBI:32364"/>
    </ligand>
</feature>
<feature type="binding site" evidence="1">
    <location>
        <position position="232"/>
    </location>
    <ligand>
        <name>3-dehydroquinate</name>
        <dbReference type="ChEBI" id="CHEBI:32364"/>
    </ligand>
</feature>
<feature type="binding site" evidence="1">
    <location>
        <position position="236"/>
    </location>
    <ligand>
        <name>3-dehydroquinate</name>
        <dbReference type="ChEBI" id="CHEBI:32364"/>
    </ligand>
</feature>
<organism>
    <name type="scientific">Escherichia coli O6:H1 (strain CFT073 / ATCC 700928 / UPEC)</name>
    <dbReference type="NCBI Taxonomy" id="199310"/>
    <lineage>
        <taxon>Bacteria</taxon>
        <taxon>Pseudomonadati</taxon>
        <taxon>Pseudomonadota</taxon>
        <taxon>Gammaproteobacteria</taxon>
        <taxon>Enterobacterales</taxon>
        <taxon>Enterobacteriaceae</taxon>
        <taxon>Escherichia</taxon>
    </lineage>
</organism>